<accession>Q4AE11</accession>
<proteinExistence type="evidence at transcript level"/>
<organism>
    <name type="scientific">Fragaria ananassa</name>
    <name type="common">Strawberry</name>
    <name type="synonym">Fragaria chiloensis x Fragaria virginiana</name>
    <dbReference type="NCBI Taxonomy" id="3747"/>
    <lineage>
        <taxon>Eukaryota</taxon>
        <taxon>Viridiplantae</taxon>
        <taxon>Streptophyta</taxon>
        <taxon>Embryophyta</taxon>
        <taxon>Tracheophyta</taxon>
        <taxon>Spermatophyta</taxon>
        <taxon>Magnoliopsida</taxon>
        <taxon>eudicotyledons</taxon>
        <taxon>Gunneridae</taxon>
        <taxon>Pentapetalae</taxon>
        <taxon>rosids</taxon>
        <taxon>fabids</taxon>
        <taxon>Rosales</taxon>
        <taxon>Rosaceae</taxon>
        <taxon>Rosoideae</taxon>
        <taxon>Potentilleae</taxon>
        <taxon>Fragariinae</taxon>
        <taxon>Fragaria</taxon>
    </lineage>
</organism>
<sequence>MAQSVTGIQIGGMSFPPSVKPPGSGNTFFLGGAGVRGMEIQGNFVKFTAIGVYLEDKAVPALAVKWKGKTAEELTESVEFFREIVTGPFEKFTQVTMILPLTGQQYSEKVSENCVAIWKKFGIYTDAEAKAIEKFIEVFKDQTFPPGASILFTQSPDGSLTIGFSKDGCIPEVGNAVIENKLLSESVLESIIGKPGVSPEARKSVATRLSELLKESDHCVAGNGKVDECTKEAEVKA</sequence>
<name>CFI1_FRAAN</name>
<dbReference type="EC" id="5.5.1.6"/>
<dbReference type="EMBL" id="AB201755">
    <property type="protein sequence ID" value="BAE17121.1"/>
    <property type="molecule type" value="mRNA"/>
</dbReference>
<dbReference type="SMR" id="Q4AE11"/>
<dbReference type="UniPathway" id="UPA00154"/>
<dbReference type="GO" id="GO:0045430">
    <property type="term" value="F:chalcone isomerase activity"/>
    <property type="evidence" value="ECO:0007669"/>
    <property type="project" value="UniProtKB-EC"/>
</dbReference>
<dbReference type="GO" id="GO:0009813">
    <property type="term" value="P:flavonoid biosynthetic process"/>
    <property type="evidence" value="ECO:0007669"/>
    <property type="project" value="UniProtKB-UniPathway"/>
</dbReference>
<dbReference type="Gene3D" id="1.10.890.20">
    <property type="match status" value="1"/>
</dbReference>
<dbReference type="Gene3D" id="3.50.70.10">
    <property type="match status" value="1"/>
</dbReference>
<dbReference type="InterPro" id="IPR044164">
    <property type="entry name" value="CFI"/>
</dbReference>
<dbReference type="InterPro" id="IPR016087">
    <property type="entry name" value="Chalcone_isomerase"/>
</dbReference>
<dbReference type="InterPro" id="IPR016088">
    <property type="entry name" value="Chalcone_isomerase_3-sand"/>
</dbReference>
<dbReference type="InterPro" id="IPR016089">
    <property type="entry name" value="Chalcone_isomerase_bundle_sf"/>
</dbReference>
<dbReference type="InterPro" id="IPR036298">
    <property type="entry name" value="Chalcone_isomerase_sf"/>
</dbReference>
<dbReference type="PANTHER" id="PTHR28039:SF8">
    <property type="entry name" value="CHALCONE--FLAVANONE ISOMERASE 1-RELATED"/>
    <property type="match status" value="1"/>
</dbReference>
<dbReference type="PANTHER" id="PTHR28039">
    <property type="entry name" value="CHALCONE--FLAVONONE ISOMERASE 1-RELATED"/>
    <property type="match status" value="1"/>
</dbReference>
<dbReference type="Pfam" id="PF02431">
    <property type="entry name" value="Chalcone"/>
    <property type="match status" value="1"/>
</dbReference>
<dbReference type="SUPFAM" id="SSF54626">
    <property type="entry name" value="Chalcone isomerase"/>
    <property type="match status" value="1"/>
</dbReference>
<evidence type="ECO:0000250" key="1"/>
<evidence type="ECO:0000305" key="2"/>
<feature type="chain" id="PRO_0000300836" description="Chalcone--flavanone isomerase 1">
    <location>
        <begin position="1"/>
        <end position="237"/>
    </location>
</feature>
<feature type="binding site" evidence="1">
    <location>
        <position position="48"/>
    </location>
    <ligand>
        <name>substrate</name>
    </ligand>
</feature>
<feature type="binding site" evidence="1">
    <location>
        <position position="113"/>
    </location>
    <ligand>
        <name>substrate</name>
    </ligand>
</feature>
<feature type="binding site" evidence="1">
    <location>
        <position position="190"/>
    </location>
    <ligand>
        <name>substrate</name>
    </ligand>
</feature>
<feature type="site" description="Important for catalytic activity" evidence="1">
    <location>
        <position position="106"/>
    </location>
</feature>
<comment type="function">
    <text evidence="1">Catalyzes the intramolecular cyclization of bicyclic chalcones into tricyclic (S)-flavanones. Responsible for the isomerization of 4,2',4',6'-tetrahydroxychalcone (also termed chalcone) into naringenin (By similarity).</text>
</comment>
<comment type="catalytic activity">
    <reaction>
        <text>a chalcone = a flavanone.</text>
        <dbReference type="EC" id="5.5.1.6"/>
    </reaction>
</comment>
<comment type="pathway">
    <text>Secondary metabolite biosynthesis; flavonoid biosynthesis.</text>
</comment>
<comment type="miscellaneous">
    <text>Part of the biosynthetic pathway for all classes of flavonoids, a large class of secondary plant metabolites, many of which are brightly colored.</text>
</comment>
<comment type="similarity">
    <text evidence="2">Belongs to the chalcone isomerase family.</text>
</comment>
<keyword id="KW-0284">Flavonoid biosynthesis</keyword>
<keyword id="KW-0413">Isomerase</keyword>
<reference key="1">
    <citation type="submission" date="2005-02" db="EMBL/GenBank/DDBJ databases">
        <title>Genes regulating anthocyanin-synthesis pathway in white wild strawberry.</title>
        <authorList>
            <person name="Adachi Y."/>
            <person name="Chiba N."/>
            <person name="Suzuki G."/>
            <person name="Kano H."/>
            <person name="Nakamura S."/>
        </authorList>
    </citation>
    <scope>NUCLEOTIDE SEQUENCE [MRNA]</scope>
    <source>
        <strain>cv. Sachinoka</strain>
        <tissue>Fruit cortical tissue</tissue>
    </source>
</reference>
<protein>
    <recommendedName>
        <fullName>Chalcone--flavanone isomerase 1</fullName>
        <shortName>Chalcone isomerase 1</shortName>
        <ecNumber>5.5.1.6</ecNumber>
    </recommendedName>
</protein>
<gene>
    <name type="primary">CHI1</name>
    <name type="synonym">FrCHI23</name>
</gene>